<reference key="1">
    <citation type="journal article" date="2008" name="PLoS ONE">
        <title>Comparative analysis of Acinetobacters: three genomes for three lifestyles.</title>
        <authorList>
            <person name="Vallenet D."/>
            <person name="Nordmann P."/>
            <person name="Barbe V."/>
            <person name="Poirel L."/>
            <person name="Mangenot S."/>
            <person name="Bataille E."/>
            <person name="Dossat C."/>
            <person name="Gas S."/>
            <person name="Kreimeyer A."/>
            <person name="Lenoble P."/>
            <person name="Oztas S."/>
            <person name="Poulain J."/>
            <person name="Segurens B."/>
            <person name="Robert C."/>
            <person name="Abergel C."/>
            <person name="Claverie J.-M."/>
            <person name="Raoult D."/>
            <person name="Medigue C."/>
            <person name="Weissenbach J."/>
            <person name="Cruveiller S."/>
        </authorList>
    </citation>
    <scope>NUCLEOTIDE SEQUENCE [LARGE SCALE GENOMIC DNA]</scope>
    <source>
        <strain>SDF</strain>
    </source>
</reference>
<feature type="chain" id="PRO_1000115319" description="Chorismate synthase">
    <location>
        <begin position="1"/>
        <end position="363"/>
    </location>
</feature>
<feature type="binding site" evidence="1">
    <location>
        <position position="48"/>
    </location>
    <ligand>
        <name>NADP(+)</name>
        <dbReference type="ChEBI" id="CHEBI:58349"/>
    </ligand>
</feature>
<feature type="binding site" evidence="1">
    <location>
        <begin position="125"/>
        <end position="127"/>
    </location>
    <ligand>
        <name>FMN</name>
        <dbReference type="ChEBI" id="CHEBI:58210"/>
    </ligand>
</feature>
<feature type="binding site" evidence="1">
    <location>
        <begin position="238"/>
        <end position="239"/>
    </location>
    <ligand>
        <name>FMN</name>
        <dbReference type="ChEBI" id="CHEBI:58210"/>
    </ligand>
</feature>
<feature type="binding site" evidence="1">
    <location>
        <position position="278"/>
    </location>
    <ligand>
        <name>FMN</name>
        <dbReference type="ChEBI" id="CHEBI:58210"/>
    </ligand>
</feature>
<feature type="binding site" evidence="1">
    <location>
        <begin position="293"/>
        <end position="297"/>
    </location>
    <ligand>
        <name>FMN</name>
        <dbReference type="ChEBI" id="CHEBI:58210"/>
    </ligand>
</feature>
<feature type="binding site" evidence="1">
    <location>
        <position position="319"/>
    </location>
    <ligand>
        <name>FMN</name>
        <dbReference type="ChEBI" id="CHEBI:58210"/>
    </ligand>
</feature>
<protein>
    <recommendedName>
        <fullName evidence="1">Chorismate synthase</fullName>
        <shortName evidence="1">CS</shortName>
        <ecNumber evidence="1">4.2.3.5</ecNumber>
    </recommendedName>
    <alternativeName>
        <fullName evidence="1">5-enolpyruvylshikimate-3-phosphate phospholyase</fullName>
    </alternativeName>
</protein>
<accession>B0VPN2</accession>
<proteinExistence type="inferred from homology"/>
<dbReference type="EC" id="4.2.3.5" evidence="1"/>
<dbReference type="EMBL" id="CU468230">
    <property type="protein sequence ID" value="CAP01265.1"/>
    <property type="molecule type" value="Genomic_DNA"/>
</dbReference>
<dbReference type="SMR" id="B0VPN2"/>
<dbReference type="KEGG" id="abm:ABSDF1930"/>
<dbReference type="HOGENOM" id="CLU_034547_0_2_6"/>
<dbReference type="UniPathway" id="UPA00053">
    <property type="reaction ID" value="UER00090"/>
</dbReference>
<dbReference type="Proteomes" id="UP000001741">
    <property type="component" value="Chromosome"/>
</dbReference>
<dbReference type="GO" id="GO:0005829">
    <property type="term" value="C:cytosol"/>
    <property type="evidence" value="ECO:0007669"/>
    <property type="project" value="TreeGrafter"/>
</dbReference>
<dbReference type="GO" id="GO:0004107">
    <property type="term" value="F:chorismate synthase activity"/>
    <property type="evidence" value="ECO:0007669"/>
    <property type="project" value="UniProtKB-UniRule"/>
</dbReference>
<dbReference type="GO" id="GO:0010181">
    <property type="term" value="F:FMN binding"/>
    <property type="evidence" value="ECO:0007669"/>
    <property type="project" value="TreeGrafter"/>
</dbReference>
<dbReference type="GO" id="GO:0008652">
    <property type="term" value="P:amino acid biosynthetic process"/>
    <property type="evidence" value="ECO:0007669"/>
    <property type="project" value="UniProtKB-KW"/>
</dbReference>
<dbReference type="GO" id="GO:0009073">
    <property type="term" value="P:aromatic amino acid family biosynthetic process"/>
    <property type="evidence" value="ECO:0007669"/>
    <property type="project" value="UniProtKB-KW"/>
</dbReference>
<dbReference type="GO" id="GO:0009423">
    <property type="term" value="P:chorismate biosynthetic process"/>
    <property type="evidence" value="ECO:0007669"/>
    <property type="project" value="UniProtKB-UniRule"/>
</dbReference>
<dbReference type="CDD" id="cd07304">
    <property type="entry name" value="Chorismate_synthase"/>
    <property type="match status" value="1"/>
</dbReference>
<dbReference type="FunFam" id="3.60.150.10:FF:000001">
    <property type="entry name" value="Chorismate synthase"/>
    <property type="match status" value="1"/>
</dbReference>
<dbReference type="Gene3D" id="3.60.150.10">
    <property type="entry name" value="Chorismate synthase AroC"/>
    <property type="match status" value="1"/>
</dbReference>
<dbReference type="HAMAP" id="MF_00300">
    <property type="entry name" value="Chorismate_synth"/>
    <property type="match status" value="1"/>
</dbReference>
<dbReference type="InterPro" id="IPR000453">
    <property type="entry name" value="Chorismate_synth"/>
</dbReference>
<dbReference type="InterPro" id="IPR035904">
    <property type="entry name" value="Chorismate_synth_AroC_sf"/>
</dbReference>
<dbReference type="InterPro" id="IPR020541">
    <property type="entry name" value="Chorismate_synthase_CS"/>
</dbReference>
<dbReference type="NCBIfam" id="TIGR00033">
    <property type="entry name" value="aroC"/>
    <property type="match status" value="1"/>
</dbReference>
<dbReference type="NCBIfam" id="NF003793">
    <property type="entry name" value="PRK05382.1"/>
    <property type="match status" value="1"/>
</dbReference>
<dbReference type="PANTHER" id="PTHR21085">
    <property type="entry name" value="CHORISMATE SYNTHASE"/>
    <property type="match status" value="1"/>
</dbReference>
<dbReference type="PANTHER" id="PTHR21085:SF0">
    <property type="entry name" value="CHORISMATE SYNTHASE"/>
    <property type="match status" value="1"/>
</dbReference>
<dbReference type="Pfam" id="PF01264">
    <property type="entry name" value="Chorismate_synt"/>
    <property type="match status" value="1"/>
</dbReference>
<dbReference type="PIRSF" id="PIRSF001456">
    <property type="entry name" value="Chorismate_synth"/>
    <property type="match status" value="1"/>
</dbReference>
<dbReference type="SUPFAM" id="SSF103263">
    <property type="entry name" value="Chorismate synthase, AroC"/>
    <property type="match status" value="1"/>
</dbReference>
<dbReference type="PROSITE" id="PS00787">
    <property type="entry name" value="CHORISMATE_SYNTHASE_1"/>
    <property type="match status" value="1"/>
</dbReference>
<dbReference type="PROSITE" id="PS00788">
    <property type="entry name" value="CHORISMATE_SYNTHASE_2"/>
    <property type="match status" value="1"/>
</dbReference>
<dbReference type="PROSITE" id="PS00789">
    <property type="entry name" value="CHORISMATE_SYNTHASE_3"/>
    <property type="match status" value="1"/>
</dbReference>
<organism>
    <name type="scientific">Acinetobacter baumannii (strain SDF)</name>
    <dbReference type="NCBI Taxonomy" id="509170"/>
    <lineage>
        <taxon>Bacteria</taxon>
        <taxon>Pseudomonadati</taxon>
        <taxon>Pseudomonadota</taxon>
        <taxon>Gammaproteobacteria</taxon>
        <taxon>Moraxellales</taxon>
        <taxon>Moraxellaceae</taxon>
        <taxon>Acinetobacter</taxon>
        <taxon>Acinetobacter calcoaceticus/baumannii complex</taxon>
    </lineage>
</organism>
<sequence length="363" mass="39070">MAGNSIGQLFRVTTCGESHGVGLMAIVDGVPPGLALTEEDLQKDLDRRKPGTSKFATQRKEPDQVEIISGVFEGKTTGTPIGLLIRNTDQKSKDYGNIAQTFRPGHADYTYTQKYGFRDYRGGGRSSARETAMRVAAGAIAKKYLAEKFGILIRGHVTQIGNEVAEKLDWNEVPNNPFFCGDVDAVPRFEALVKSLREQGTSCGAKLEILAEKVPVGWGEPVFDRLDADIAHAMMSINAVKGVEIGDGFAVAGQFGHETRDELTSHGFLANHAGGILGGISSGQTIRVAIALKPTASITTPGKTINLNREDTDVLTKGRHDPCVGVRATPIAEAMLAIVLMDHFLRHRAQNADVVPPFVPIEP</sequence>
<name>AROC_ACIBS</name>
<comment type="function">
    <text evidence="1">Catalyzes the anti-1,4-elimination of the C-3 phosphate and the C-6 proR hydrogen from 5-enolpyruvylshikimate-3-phosphate (EPSP) to yield chorismate, which is the branch point compound that serves as the starting substrate for the three terminal pathways of aromatic amino acid biosynthesis. This reaction introduces a second double bond into the aromatic ring system.</text>
</comment>
<comment type="catalytic activity">
    <reaction evidence="1">
        <text>5-O-(1-carboxyvinyl)-3-phosphoshikimate = chorismate + phosphate</text>
        <dbReference type="Rhea" id="RHEA:21020"/>
        <dbReference type="ChEBI" id="CHEBI:29748"/>
        <dbReference type="ChEBI" id="CHEBI:43474"/>
        <dbReference type="ChEBI" id="CHEBI:57701"/>
        <dbReference type="EC" id="4.2.3.5"/>
    </reaction>
</comment>
<comment type="cofactor">
    <cofactor evidence="1">
        <name>FMNH2</name>
        <dbReference type="ChEBI" id="CHEBI:57618"/>
    </cofactor>
    <text evidence="1">Reduced FMN (FMNH(2)).</text>
</comment>
<comment type="pathway">
    <text evidence="1">Metabolic intermediate biosynthesis; chorismate biosynthesis; chorismate from D-erythrose 4-phosphate and phosphoenolpyruvate: step 7/7.</text>
</comment>
<comment type="subunit">
    <text evidence="1">Homotetramer.</text>
</comment>
<comment type="similarity">
    <text evidence="1">Belongs to the chorismate synthase family.</text>
</comment>
<evidence type="ECO:0000255" key="1">
    <source>
        <dbReference type="HAMAP-Rule" id="MF_00300"/>
    </source>
</evidence>
<keyword id="KW-0028">Amino-acid biosynthesis</keyword>
<keyword id="KW-0057">Aromatic amino acid biosynthesis</keyword>
<keyword id="KW-0274">FAD</keyword>
<keyword id="KW-0285">Flavoprotein</keyword>
<keyword id="KW-0288">FMN</keyword>
<keyword id="KW-0456">Lyase</keyword>
<keyword id="KW-0521">NADP</keyword>
<gene>
    <name evidence="1" type="primary">aroC</name>
    <name type="ordered locus">ABSDF1930</name>
</gene>